<sequence length="220" mass="23520">MTQDEMKFTVAQTALKYVIKNTIIGVGTGSTANFFIDALSTIKNNIKGAVASSKATAQRLENHGIRVFDLNKVTAISTYIDGADESDNNLNLIKGGGGALTREKIVAAVAHQFICIADESKLVSIMGSFPLPIEVIPMAANYVKNQISQKIGGIPEVRKDFITDNGNFILDIKDLKITNPKAMETKLNSIIGVVTNGLFANRGANVLLLGTPNGVKIITN</sequence>
<dbReference type="EC" id="5.3.1.6" evidence="1"/>
<dbReference type="EMBL" id="AP009247">
    <property type="protein sequence ID" value="BAF61350.1"/>
    <property type="molecule type" value="Genomic_DNA"/>
</dbReference>
<dbReference type="RefSeq" id="WP_011929620.1">
    <property type="nucleotide sequence ID" value="NC_009465.1"/>
</dbReference>
<dbReference type="SMR" id="A5CXI2"/>
<dbReference type="STRING" id="412965.COSY_0220"/>
<dbReference type="KEGG" id="vok:COSY_0220"/>
<dbReference type="eggNOG" id="COG0120">
    <property type="taxonomic scope" value="Bacteria"/>
</dbReference>
<dbReference type="HOGENOM" id="CLU_056590_1_1_6"/>
<dbReference type="OrthoDB" id="5870696at2"/>
<dbReference type="UniPathway" id="UPA00115">
    <property type="reaction ID" value="UER00412"/>
</dbReference>
<dbReference type="Proteomes" id="UP000000247">
    <property type="component" value="Chromosome"/>
</dbReference>
<dbReference type="GO" id="GO:0005829">
    <property type="term" value="C:cytosol"/>
    <property type="evidence" value="ECO:0007669"/>
    <property type="project" value="TreeGrafter"/>
</dbReference>
<dbReference type="GO" id="GO:0004751">
    <property type="term" value="F:ribose-5-phosphate isomerase activity"/>
    <property type="evidence" value="ECO:0007669"/>
    <property type="project" value="UniProtKB-UniRule"/>
</dbReference>
<dbReference type="GO" id="GO:0006014">
    <property type="term" value="P:D-ribose metabolic process"/>
    <property type="evidence" value="ECO:0007669"/>
    <property type="project" value="TreeGrafter"/>
</dbReference>
<dbReference type="GO" id="GO:0009052">
    <property type="term" value="P:pentose-phosphate shunt, non-oxidative branch"/>
    <property type="evidence" value="ECO:0007669"/>
    <property type="project" value="UniProtKB-UniRule"/>
</dbReference>
<dbReference type="CDD" id="cd01398">
    <property type="entry name" value="RPI_A"/>
    <property type="match status" value="1"/>
</dbReference>
<dbReference type="FunFam" id="3.40.50.1360:FF:000001">
    <property type="entry name" value="Ribose-5-phosphate isomerase A"/>
    <property type="match status" value="1"/>
</dbReference>
<dbReference type="Gene3D" id="3.30.70.260">
    <property type="match status" value="1"/>
</dbReference>
<dbReference type="Gene3D" id="3.40.50.1360">
    <property type="match status" value="1"/>
</dbReference>
<dbReference type="HAMAP" id="MF_00170">
    <property type="entry name" value="Rib_5P_isom_A"/>
    <property type="match status" value="1"/>
</dbReference>
<dbReference type="InterPro" id="IPR037171">
    <property type="entry name" value="NagB/RpiA_transferase-like"/>
</dbReference>
<dbReference type="InterPro" id="IPR020672">
    <property type="entry name" value="Ribose5P_isomerase_typA_subgr"/>
</dbReference>
<dbReference type="InterPro" id="IPR004788">
    <property type="entry name" value="Ribose5P_isomerase_type_A"/>
</dbReference>
<dbReference type="NCBIfam" id="NF001924">
    <property type="entry name" value="PRK00702.1"/>
    <property type="match status" value="1"/>
</dbReference>
<dbReference type="NCBIfam" id="TIGR00021">
    <property type="entry name" value="rpiA"/>
    <property type="match status" value="1"/>
</dbReference>
<dbReference type="PANTHER" id="PTHR11934">
    <property type="entry name" value="RIBOSE-5-PHOSPHATE ISOMERASE"/>
    <property type="match status" value="1"/>
</dbReference>
<dbReference type="PANTHER" id="PTHR11934:SF0">
    <property type="entry name" value="RIBOSE-5-PHOSPHATE ISOMERASE"/>
    <property type="match status" value="1"/>
</dbReference>
<dbReference type="Pfam" id="PF06026">
    <property type="entry name" value="Rib_5-P_isom_A"/>
    <property type="match status" value="1"/>
</dbReference>
<dbReference type="SUPFAM" id="SSF75445">
    <property type="entry name" value="D-ribose-5-phosphate isomerase (RpiA), lid domain"/>
    <property type="match status" value="1"/>
</dbReference>
<dbReference type="SUPFAM" id="SSF100950">
    <property type="entry name" value="NagB/RpiA/CoA transferase-like"/>
    <property type="match status" value="1"/>
</dbReference>
<organism>
    <name type="scientific">Vesicomyosocius okutanii subsp. Calyptogena okutanii (strain HA)</name>
    <dbReference type="NCBI Taxonomy" id="412965"/>
    <lineage>
        <taxon>Bacteria</taxon>
        <taxon>Pseudomonadati</taxon>
        <taxon>Pseudomonadota</taxon>
        <taxon>Gammaproteobacteria</taxon>
        <taxon>Candidatus Pseudothioglobaceae</taxon>
        <taxon>Candidatus Vesicomyosocius</taxon>
    </lineage>
</organism>
<accession>A5CXI2</accession>
<gene>
    <name evidence="1" type="primary">rpiA</name>
    <name type="ordered locus">COSY_0220</name>
</gene>
<feature type="chain" id="PRO_1000017025" description="Ribose-5-phosphate isomerase A">
    <location>
        <begin position="1"/>
        <end position="220"/>
    </location>
</feature>
<feature type="active site" description="Proton acceptor" evidence="1">
    <location>
        <position position="103"/>
    </location>
</feature>
<feature type="binding site" evidence="1">
    <location>
        <begin position="28"/>
        <end position="31"/>
    </location>
    <ligand>
        <name>substrate</name>
    </ligand>
</feature>
<feature type="binding site" evidence="1">
    <location>
        <begin position="81"/>
        <end position="84"/>
    </location>
    <ligand>
        <name>substrate</name>
    </ligand>
</feature>
<feature type="binding site" evidence="1">
    <location>
        <begin position="94"/>
        <end position="97"/>
    </location>
    <ligand>
        <name>substrate</name>
    </ligand>
</feature>
<feature type="binding site" evidence="1">
    <location>
        <position position="121"/>
    </location>
    <ligand>
        <name>substrate</name>
    </ligand>
</feature>
<name>RPIA_VESOH</name>
<proteinExistence type="inferred from homology"/>
<comment type="function">
    <text evidence="1">Catalyzes the reversible conversion of ribose-5-phosphate to ribulose 5-phosphate.</text>
</comment>
<comment type="catalytic activity">
    <reaction evidence="1">
        <text>aldehydo-D-ribose 5-phosphate = D-ribulose 5-phosphate</text>
        <dbReference type="Rhea" id="RHEA:14657"/>
        <dbReference type="ChEBI" id="CHEBI:58121"/>
        <dbReference type="ChEBI" id="CHEBI:58273"/>
        <dbReference type="EC" id="5.3.1.6"/>
    </reaction>
</comment>
<comment type="pathway">
    <text evidence="1">Carbohydrate degradation; pentose phosphate pathway; D-ribose 5-phosphate from D-ribulose 5-phosphate (non-oxidative stage): step 1/1.</text>
</comment>
<comment type="subunit">
    <text evidence="1">Homodimer.</text>
</comment>
<comment type="similarity">
    <text evidence="1">Belongs to the ribose 5-phosphate isomerase family.</text>
</comment>
<reference key="1">
    <citation type="journal article" date="2007" name="Curr. Biol.">
        <title>Reduced genome of the thioautotrophic intracellular symbiont in a deep-sea clam, Calyptogena okutanii.</title>
        <authorList>
            <person name="Kuwahara H."/>
            <person name="Yoshida T."/>
            <person name="Takaki Y."/>
            <person name="Shimamura S."/>
            <person name="Nishi S."/>
            <person name="Harada M."/>
            <person name="Matsuyama K."/>
            <person name="Takishita K."/>
            <person name="Kawato M."/>
            <person name="Uematsu K."/>
            <person name="Fujiwara Y."/>
            <person name="Sato T."/>
            <person name="Kato C."/>
            <person name="Kitagawa M."/>
            <person name="Kato I."/>
            <person name="Maruyama T."/>
        </authorList>
    </citation>
    <scope>NUCLEOTIDE SEQUENCE [LARGE SCALE GENOMIC DNA]</scope>
    <source>
        <strain>HA</strain>
    </source>
</reference>
<protein>
    <recommendedName>
        <fullName evidence="1">Ribose-5-phosphate isomerase A</fullName>
        <ecNumber evidence="1">5.3.1.6</ecNumber>
    </recommendedName>
    <alternativeName>
        <fullName evidence="1">Phosphoriboisomerase A</fullName>
        <shortName evidence="1">PRI</shortName>
    </alternativeName>
</protein>
<keyword id="KW-0413">Isomerase</keyword>
<keyword id="KW-1185">Reference proteome</keyword>
<evidence type="ECO:0000255" key="1">
    <source>
        <dbReference type="HAMAP-Rule" id="MF_00170"/>
    </source>
</evidence>